<evidence type="ECO:0000255" key="1">
    <source>
        <dbReference type="HAMAP-Rule" id="MF_00491"/>
    </source>
</evidence>
<name>NU4C_DAUCA</name>
<accession>Q0G9R2</accession>
<keyword id="KW-0150">Chloroplast</keyword>
<keyword id="KW-0472">Membrane</keyword>
<keyword id="KW-0520">NAD</keyword>
<keyword id="KW-0521">NADP</keyword>
<keyword id="KW-0934">Plastid</keyword>
<keyword id="KW-0618">Plastoquinone</keyword>
<keyword id="KW-0874">Quinone</keyword>
<keyword id="KW-0793">Thylakoid</keyword>
<keyword id="KW-1278">Translocase</keyword>
<keyword id="KW-0812">Transmembrane</keyword>
<keyword id="KW-1133">Transmembrane helix</keyword>
<protein>
    <recommendedName>
        <fullName evidence="1">NAD(P)H-quinone oxidoreductase chain 4, chloroplastic</fullName>
        <ecNumber evidence="1">7.1.1.-</ecNumber>
    </recommendedName>
    <alternativeName>
        <fullName evidence="1">NAD(P)H dehydrogenase, chain 4</fullName>
    </alternativeName>
    <alternativeName>
        <fullName evidence="1">NADH-plastoquinone oxidoreductase chain 4</fullName>
    </alternativeName>
</protein>
<gene>
    <name evidence="1" type="primary">ndhD</name>
</gene>
<dbReference type="EC" id="7.1.1.-" evidence="1"/>
<dbReference type="EMBL" id="DQ898156">
    <property type="protein sequence ID" value="ABI32474.1"/>
    <property type="molecule type" value="Genomic_DNA"/>
</dbReference>
<dbReference type="RefSeq" id="YP_740167.1">
    <property type="nucleotide sequence ID" value="NC_008325.1"/>
</dbReference>
<dbReference type="SMR" id="Q0G9R2"/>
<dbReference type="GeneID" id="4266810"/>
<dbReference type="GO" id="GO:0009535">
    <property type="term" value="C:chloroplast thylakoid membrane"/>
    <property type="evidence" value="ECO:0007669"/>
    <property type="project" value="UniProtKB-SubCell"/>
</dbReference>
<dbReference type="GO" id="GO:0008137">
    <property type="term" value="F:NADH dehydrogenase (ubiquinone) activity"/>
    <property type="evidence" value="ECO:0007669"/>
    <property type="project" value="InterPro"/>
</dbReference>
<dbReference type="GO" id="GO:0048039">
    <property type="term" value="F:ubiquinone binding"/>
    <property type="evidence" value="ECO:0007669"/>
    <property type="project" value="TreeGrafter"/>
</dbReference>
<dbReference type="GO" id="GO:0042773">
    <property type="term" value="P:ATP synthesis coupled electron transport"/>
    <property type="evidence" value="ECO:0007669"/>
    <property type="project" value="InterPro"/>
</dbReference>
<dbReference type="GO" id="GO:0015990">
    <property type="term" value="P:electron transport coupled proton transport"/>
    <property type="evidence" value="ECO:0007669"/>
    <property type="project" value="TreeGrafter"/>
</dbReference>
<dbReference type="HAMAP" id="MF_00491">
    <property type="entry name" value="NDH1_NuoM"/>
    <property type="match status" value="1"/>
</dbReference>
<dbReference type="InterPro" id="IPR022997">
    <property type="entry name" value="NADH_Q_OxRdtase_chain4"/>
</dbReference>
<dbReference type="InterPro" id="IPR010227">
    <property type="entry name" value="NADH_Q_OxRdtase_chainM/4"/>
</dbReference>
<dbReference type="InterPro" id="IPR003918">
    <property type="entry name" value="NADH_UbQ_OxRdtase"/>
</dbReference>
<dbReference type="InterPro" id="IPR001750">
    <property type="entry name" value="ND/Mrp_TM"/>
</dbReference>
<dbReference type="NCBIfam" id="TIGR01972">
    <property type="entry name" value="NDH_I_M"/>
    <property type="match status" value="1"/>
</dbReference>
<dbReference type="PANTHER" id="PTHR43507:SF21">
    <property type="entry name" value="NAD(P)H-QUINONE OXIDOREDUCTASE CHAIN 4, CHLOROPLASTIC"/>
    <property type="match status" value="1"/>
</dbReference>
<dbReference type="PANTHER" id="PTHR43507">
    <property type="entry name" value="NADH-UBIQUINONE OXIDOREDUCTASE CHAIN 4"/>
    <property type="match status" value="1"/>
</dbReference>
<dbReference type="Pfam" id="PF00361">
    <property type="entry name" value="Proton_antipo_M"/>
    <property type="match status" value="1"/>
</dbReference>
<dbReference type="PRINTS" id="PR01437">
    <property type="entry name" value="NUOXDRDTASE4"/>
</dbReference>
<comment type="catalytic activity">
    <reaction evidence="1">
        <text>a plastoquinone + NADH + (n+1) H(+)(in) = a plastoquinol + NAD(+) + n H(+)(out)</text>
        <dbReference type="Rhea" id="RHEA:42608"/>
        <dbReference type="Rhea" id="RHEA-COMP:9561"/>
        <dbReference type="Rhea" id="RHEA-COMP:9562"/>
        <dbReference type="ChEBI" id="CHEBI:15378"/>
        <dbReference type="ChEBI" id="CHEBI:17757"/>
        <dbReference type="ChEBI" id="CHEBI:57540"/>
        <dbReference type="ChEBI" id="CHEBI:57945"/>
        <dbReference type="ChEBI" id="CHEBI:62192"/>
    </reaction>
</comment>
<comment type="catalytic activity">
    <reaction evidence="1">
        <text>a plastoquinone + NADPH + (n+1) H(+)(in) = a plastoquinol + NADP(+) + n H(+)(out)</text>
        <dbReference type="Rhea" id="RHEA:42612"/>
        <dbReference type="Rhea" id="RHEA-COMP:9561"/>
        <dbReference type="Rhea" id="RHEA-COMP:9562"/>
        <dbReference type="ChEBI" id="CHEBI:15378"/>
        <dbReference type="ChEBI" id="CHEBI:17757"/>
        <dbReference type="ChEBI" id="CHEBI:57783"/>
        <dbReference type="ChEBI" id="CHEBI:58349"/>
        <dbReference type="ChEBI" id="CHEBI:62192"/>
    </reaction>
</comment>
<comment type="subcellular location">
    <subcellularLocation>
        <location evidence="1">Plastid</location>
        <location evidence="1">Chloroplast thylakoid membrane</location>
        <topology evidence="1">Multi-pass membrane protein</topology>
    </subcellularLocation>
</comment>
<comment type="similarity">
    <text evidence="1">Belongs to the complex I subunit 4 family.</text>
</comment>
<reference key="1">
    <citation type="journal article" date="2006" name="BMC Genomics">
        <title>Complete plastid genome sequence of Daucus carota: implications for biotechnology and phylogeny of angiosperms.</title>
        <authorList>
            <person name="Ruhlman T."/>
            <person name="Lee S.-B."/>
            <person name="Jansen R.K."/>
            <person name="Hostetler J.B."/>
            <person name="Tallon L.J."/>
            <person name="Town C.D."/>
            <person name="Daniell H."/>
        </authorList>
    </citation>
    <scope>NUCLEOTIDE SEQUENCE [LARGE SCALE GENOMIC DNA]</scope>
    <source>
        <strain>cv. Danvers Half-long</strain>
    </source>
</reference>
<organism>
    <name type="scientific">Daucus carota</name>
    <name type="common">Wild carrot</name>
    <dbReference type="NCBI Taxonomy" id="4039"/>
    <lineage>
        <taxon>Eukaryota</taxon>
        <taxon>Viridiplantae</taxon>
        <taxon>Streptophyta</taxon>
        <taxon>Embryophyta</taxon>
        <taxon>Tracheophyta</taxon>
        <taxon>Spermatophyta</taxon>
        <taxon>Magnoliopsida</taxon>
        <taxon>eudicotyledons</taxon>
        <taxon>Gunneridae</taxon>
        <taxon>Pentapetalae</taxon>
        <taxon>asterids</taxon>
        <taxon>campanulids</taxon>
        <taxon>Apiales</taxon>
        <taxon>Apiaceae</taxon>
        <taxon>Apioideae</taxon>
        <taxon>Scandiceae</taxon>
        <taxon>Daucinae</taxon>
        <taxon>Daucus</taxon>
        <taxon>Daucus sect. Daucus</taxon>
    </lineage>
</organism>
<sequence>MNFFPWLTIIVILPIFAGSIILFLPHRGNRVIRWYTICICILELLLTTYAFCYHFQLDDPLIQLVEDFKWIDFFDFHWRLGIDGLSIGPILLTGFITTLATLAAWPVTRDSRLFHFLMLAMYSGQIGLFASRDLLLFFIMWELELIPVYLLLSMWGGKKRLYSATKFILYTAGGSVFLLMGVLGVGLYGSTEPTLNFATLVNQSYPVALEIILYIGFFIAFAVKSPIIPLHTWLPDTHGEAHYSTCMLLAGILLKMGAYGLIRINMELLSHAHSIFSPWLVIVGTIQIIYAASTSLGQRNLKKRIAYSSVSHMGFILIGIGSINDTGLNGAILQIVSHGFIGAALFFLAGTSYDRIRLVYLDEMGGIAIPMPKIFTMFSSFSMASLALPGMSGFVAEFIVFFGIITSQKYLLISKLGITFVMAIGIILTPIYSLSMLRQMFYGYKLFNAPNSYVFDSGPRELFVSIAIFIPVIGIGMYPDFVLSLSVDKVEVLLSNFVYR</sequence>
<proteinExistence type="inferred from homology"/>
<feature type="chain" id="PRO_0000275905" description="NAD(P)H-quinone oxidoreductase chain 4, chloroplastic">
    <location>
        <begin position="1"/>
        <end position="500"/>
    </location>
</feature>
<feature type="transmembrane region" description="Helical" evidence="1">
    <location>
        <begin position="3"/>
        <end position="23"/>
    </location>
</feature>
<feature type="transmembrane region" description="Helical" evidence="1">
    <location>
        <begin position="37"/>
        <end position="57"/>
    </location>
</feature>
<feature type="transmembrane region" description="Helical" evidence="1">
    <location>
        <begin position="87"/>
        <end position="107"/>
    </location>
</feature>
<feature type="transmembrane region" description="Helical" evidence="1">
    <location>
        <begin position="113"/>
        <end position="130"/>
    </location>
</feature>
<feature type="transmembrane region" description="Helical" evidence="1">
    <location>
        <begin position="134"/>
        <end position="154"/>
    </location>
</feature>
<feature type="transmembrane region" description="Helical" evidence="1">
    <location>
        <begin position="167"/>
        <end position="187"/>
    </location>
</feature>
<feature type="transmembrane region" description="Helical" evidence="1">
    <location>
        <begin position="208"/>
        <end position="228"/>
    </location>
</feature>
<feature type="transmembrane region" description="Helical" evidence="1">
    <location>
        <begin position="242"/>
        <end position="262"/>
    </location>
</feature>
<feature type="transmembrane region" description="Helical" evidence="1">
    <location>
        <begin position="272"/>
        <end position="292"/>
    </location>
</feature>
<feature type="transmembrane region" description="Helical" evidence="1">
    <location>
        <begin position="305"/>
        <end position="325"/>
    </location>
</feature>
<feature type="transmembrane region" description="Helical" evidence="1">
    <location>
        <begin position="330"/>
        <end position="350"/>
    </location>
</feature>
<feature type="transmembrane region" description="Helical" evidence="1">
    <location>
        <begin position="364"/>
        <end position="384"/>
    </location>
</feature>
<feature type="transmembrane region" description="Helical" evidence="1">
    <location>
        <begin position="386"/>
        <end position="406"/>
    </location>
</feature>
<feature type="transmembrane region" description="Helical" evidence="1">
    <location>
        <begin position="411"/>
        <end position="431"/>
    </location>
</feature>
<feature type="transmembrane region" description="Helical" evidence="1">
    <location>
        <begin position="462"/>
        <end position="482"/>
    </location>
</feature>
<geneLocation type="chloroplast"/>